<feature type="chain" id="PRO_0000270927" description="ULP1-interacting protein 4">
    <location>
        <begin position="1"/>
        <end position="304"/>
    </location>
</feature>
<feature type="region of interest" description="Disordered" evidence="1">
    <location>
        <begin position="72"/>
        <end position="269"/>
    </location>
</feature>
<feature type="compositionally biased region" description="Basic and acidic residues" evidence="1">
    <location>
        <begin position="73"/>
        <end position="83"/>
    </location>
</feature>
<feature type="compositionally biased region" description="Polar residues" evidence="1">
    <location>
        <begin position="129"/>
        <end position="149"/>
    </location>
</feature>
<feature type="compositionally biased region" description="Basic and acidic residues" evidence="1">
    <location>
        <begin position="155"/>
        <end position="183"/>
    </location>
</feature>
<feature type="modified residue" description="Phosphoserine" evidence="4 5 6">
    <location>
        <position position="140"/>
    </location>
</feature>
<feature type="modified residue" description="Phosphoserine" evidence="4">
    <location>
        <position position="185"/>
    </location>
</feature>
<feature type="modified residue" description="Phosphoserine" evidence="4 5 6">
    <location>
        <position position="205"/>
    </location>
</feature>
<protein>
    <recommendedName>
        <fullName>ULP1-interacting protein 4</fullName>
    </recommendedName>
</protein>
<gene>
    <name type="primary">UIP4</name>
    <name type="ordered locus">YPL186C</name>
</gene>
<organism>
    <name type="scientific">Saccharomyces cerevisiae (strain ATCC 204508 / S288c)</name>
    <name type="common">Baker's yeast</name>
    <dbReference type="NCBI Taxonomy" id="559292"/>
    <lineage>
        <taxon>Eukaryota</taxon>
        <taxon>Fungi</taxon>
        <taxon>Dikarya</taxon>
        <taxon>Ascomycota</taxon>
        <taxon>Saccharomycotina</taxon>
        <taxon>Saccharomycetes</taxon>
        <taxon>Saccharomycetales</taxon>
        <taxon>Saccharomycetaceae</taxon>
        <taxon>Saccharomyces</taxon>
    </lineage>
</organism>
<name>UIP4_YEAST</name>
<accession>Q08926</accession>
<accession>D6W3I3</accession>
<dbReference type="EMBL" id="Z73542">
    <property type="protein sequence ID" value="CAA97897.1"/>
    <property type="molecule type" value="Genomic_DNA"/>
</dbReference>
<dbReference type="EMBL" id="BK006949">
    <property type="protein sequence ID" value="DAA11249.1"/>
    <property type="molecule type" value="Genomic_DNA"/>
</dbReference>
<dbReference type="PIR" id="S65198">
    <property type="entry name" value="S65198"/>
</dbReference>
<dbReference type="RefSeq" id="NP_015138.1">
    <property type="nucleotide sequence ID" value="NM_001184000.1"/>
</dbReference>
<dbReference type="BioGRID" id="35997">
    <property type="interactions" value="32"/>
</dbReference>
<dbReference type="FunCoup" id="Q08926">
    <property type="interactions" value="103"/>
</dbReference>
<dbReference type="IntAct" id="Q08926">
    <property type="interactions" value="8"/>
</dbReference>
<dbReference type="MINT" id="Q08926"/>
<dbReference type="STRING" id="4932.YPL186C"/>
<dbReference type="GlyGen" id="Q08926">
    <property type="glycosylation" value="1 site"/>
</dbReference>
<dbReference type="iPTMnet" id="Q08926"/>
<dbReference type="PaxDb" id="4932-YPL186C"/>
<dbReference type="PeptideAtlas" id="Q08926"/>
<dbReference type="TopDownProteomics" id="Q08926"/>
<dbReference type="EnsemblFungi" id="YPL186C_mRNA">
    <property type="protein sequence ID" value="YPL186C"/>
    <property type="gene ID" value="YPL186C"/>
</dbReference>
<dbReference type="GeneID" id="855916"/>
<dbReference type="KEGG" id="sce:YPL186C"/>
<dbReference type="AGR" id="SGD:S000006107"/>
<dbReference type="SGD" id="S000006107">
    <property type="gene designation" value="UIP4"/>
</dbReference>
<dbReference type="VEuPathDB" id="FungiDB:YPL186C"/>
<dbReference type="eggNOG" id="ENOG502SASQ">
    <property type="taxonomic scope" value="Eukaryota"/>
</dbReference>
<dbReference type="HOGENOM" id="CLU_079707_0_0_1"/>
<dbReference type="InParanoid" id="Q08926"/>
<dbReference type="OMA" id="RECIFFR"/>
<dbReference type="OrthoDB" id="5873279at2759"/>
<dbReference type="BioCyc" id="YEAST:G3O-34079-MONOMER"/>
<dbReference type="BioGRID-ORCS" id="855916">
    <property type="hits" value="0 hits in 10 CRISPR screens"/>
</dbReference>
<dbReference type="PRO" id="PR:Q08926"/>
<dbReference type="Proteomes" id="UP000002311">
    <property type="component" value="Chromosome XVI"/>
</dbReference>
<dbReference type="RNAct" id="Q08926">
    <property type="molecule type" value="protein"/>
</dbReference>
<dbReference type="GO" id="GO:0005783">
    <property type="term" value="C:endoplasmic reticulum"/>
    <property type="evidence" value="ECO:0000314"/>
    <property type="project" value="SGD"/>
</dbReference>
<dbReference type="GO" id="GO:0005789">
    <property type="term" value="C:endoplasmic reticulum membrane"/>
    <property type="evidence" value="ECO:0007669"/>
    <property type="project" value="UniProtKB-SubCell"/>
</dbReference>
<dbReference type="GO" id="GO:0005741">
    <property type="term" value="C:mitochondrial outer membrane"/>
    <property type="evidence" value="ECO:0007005"/>
    <property type="project" value="SGD"/>
</dbReference>
<dbReference type="GO" id="GO:0005635">
    <property type="term" value="C:nuclear envelope"/>
    <property type="evidence" value="ECO:0000314"/>
    <property type="project" value="SGD"/>
</dbReference>
<dbReference type="GO" id="GO:0006998">
    <property type="term" value="P:nuclear envelope organization"/>
    <property type="evidence" value="ECO:0000315"/>
    <property type="project" value="SGD"/>
</dbReference>
<dbReference type="CDD" id="cd02859">
    <property type="entry name" value="E_set_AMPKbeta_like_N"/>
    <property type="match status" value="1"/>
</dbReference>
<dbReference type="Gene3D" id="2.60.40.10">
    <property type="entry name" value="Immunoglobulins"/>
    <property type="match status" value="1"/>
</dbReference>
<dbReference type="InterPro" id="IPR013783">
    <property type="entry name" value="Ig-like_fold"/>
</dbReference>
<dbReference type="InterPro" id="IPR014756">
    <property type="entry name" value="Ig_E-set"/>
</dbReference>
<dbReference type="SUPFAM" id="SSF81296">
    <property type="entry name" value="E set domains"/>
    <property type="match status" value="1"/>
</dbReference>
<keyword id="KW-0256">Endoplasmic reticulum</keyword>
<keyword id="KW-0472">Membrane</keyword>
<keyword id="KW-0496">Mitochondrion</keyword>
<keyword id="KW-1000">Mitochondrion outer membrane</keyword>
<keyword id="KW-0539">Nucleus</keyword>
<keyword id="KW-0597">Phosphoprotein</keyword>
<keyword id="KW-1185">Reference proteome</keyword>
<reference key="1">
    <citation type="journal article" date="1997" name="Nature">
        <title>The nucleotide sequence of Saccharomyces cerevisiae chromosome XVI.</title>
        <authorList>
            <person name="Bussey H."/>
            <person name="Storms R.K."/>
            <person name="Ahmed A."/>
            <person name="Albermann K."/>
            <person name="Allen E."/>
            <person name="Ansorge W."/>
            <person name="Araujo R."/>
            <person name="Aparicio A."/>
            <person name="Barrell B.G."/>
            <person name="Badcock K."/>
            <person name="Benes V."/>
            <person name="Botstein D."/>
            <person name="Bowman S."/>
            <person name="Brueckner M."/>
            <person name="Carpenter J."/>
            <person name="Cherry J.M."/>
            <person name="Chung E."/>
            <person name="Churcher C.M."/>
            <person name="Coster F."/>
            <person name="Davis K."/>
            <person name="Davis R.W."/>
            <person name="Dietrich F.S."/>
            <person name="Delius H."/>
            <person name="DiPaolo T."/>
            <person name="Dubois E."/>
            <person name="Duesterhoeft A."/>
            <person name="Duncan M."/>
            <person name="Floeth M."/>
            <person name="Fortin N."/>
            <person name="Friesen J.D."/>
            <person name="Fritz C."/>
            <person name="Goffeau A."/>
            <person name="Hall J."/>
            <person name="Hebling U."/>
            <person name="Heumann K."/>
            <person name="Hilbert H."/>
            <person name="Hillier L.W."/>
            <person name="Hunicke-Smith S."/>
            <person name="Hyman R.W."/>
            <person name="Johnston M."/>
            <person name="Kalman S."/>
            <person name="Kleine K."/>
            <person name="Komp C."/>
            <person name="Kurdi O."/>
            <person name="Lashkari D."/>
            <person name="Lew H."/>
            <person name="Lin A."/>
            <person name="Lin D."/>
            <person name="Louis E.J."/>
            <person name="Marathe R."/>
            <person name="Messenguy F."/>
            <person name="Mewes H.-W."/>
            <person name="Mirtipati S."/>
            <person name="Moestl D."/>
            <person name="Mueller-Auer S."/>
            <person name="Namath A."/>
            <person name="Nentwich U."/>
            <person name="Oefner P."/>
            <person name="Pearson D."/>
            <person name="Petel F.X."/>
            <person name="Pohl T.M."/>
            <person name="Purnelle B."/>
            <person name="Rajandream M.A."/>
            <person name="Rechmann S."/>
            <person name="Rieger M."/>
            <person name="Riles L."/>
            <person name="Roberts D."/>
            <person name="Schaefer M."/>
            <person name="Scharfe M."/>
            <person name="Scherens B."/>
            <person name="Schramm S."/>
            <person name="Schroeder M."/>
            <person name="Sdicu A.-M."/>
            <person name="Tettelin H."/>
            <person name="Urrestarazu L.A."/>
            <person name="Ushinsky S."/>
            <person name="Vierendeels F."/>
            <person name="Vissers S."/>
            <person name="Voss H."/>
            <person name="Walsh S.V."/>
            <person name="Wambutt R."/>
            <person name="Wang Y."/>
            <person name="Wedler E."/>
            <person name="Wedler H."/>
            <person name="Winnett E."/>
            <person name="Zhong W.-W."/>
            <person name="Zollner A."/>
            <person name="Vo D.H."/>
            <person name="Hani J."/>
        </authorList>
    </citation>
    <scope>NUCLEOTIDE SEQUENCE [LARGE SCALE GENOMIC DNA]</scope>
    <source>
        <strain>ATCC 204508 / S288c</strain>
    </source>
</reference>
<reference key="2">
    <citation type="journal article" date="2014" name="G3 (Bethesda)">
        <title>The reference genome sequence of Saccharomyces cerevisiae: Then and now.</title>
        <authorList>
            <person name="Engel S.R."/>
            <person name="Dietrich F.S."/>
            <person name="Fisk D.G."/>
            <person name="Binkley G."/>
            <person name="Balakrishnan R."/>
            <person name="Costanzo M.C."/>
            <person name="Dwight S.S."/>
            <person name="Hitz B.C."/>
            <person name="Karra K."/>
            <person name="Nash R.S."/>
            <person name="Weng S."/>
            <person name="Wong E.D."/>
            <person name="Lloyd P."/>
            <person name="Skrzypek M.S."/>
            <person name="Miyasato S.R."/>
            <person name="Simison M."/>
            <person name="Cherry J.M."/>
        </authorList>
    </citation>
    <scope>GENOME REANNOTATION</scope>
    <source>
        <strain>ATCC 204508 / S288c</strain>
    </source>
</reference>
<reference key="3">
    <citation type="journal article" date="2000" name="J. Biochem.">
        <title>Yeast Ulp1, an Smt3-specific protease, associates with nucleoporins.</title>
        <authorList>
            <person name="Takahashi Y."/>
            <person name="Mizoi J."/>
            <person name="Toh-e A."/>
            <person name="Kikuchi Y."/>
        </authorList>
    </citation>
    <scope>INTERACTION WITH ULP1</scope>
</reference>
<reference key="4">
    <citation type="journal article" date="2006" name="Mol. Biol. Cell">
        <title>Proteomic analysis of the yeast mitochondrial outer membrane reveals accumulation of a subclass of preproteins.</title>
        <authorList>
            <person name="Zahedi R.P."/>
            <person name="Sickmann A."/>
            <person name="Boehm A.M."/>
            <person name="Winkler C."/>
            <person name="Zufall N."/>
            <person name="Schoenfisch B."/>
            <person name="Guiard B."/>
            <person name="Pfanner N."/>
            <person name="Meisinger C."/>
        </authorList>
    </citation>
    <scope>SUBCELLULAR LOCATION</scope>
    <scope>IDENTIFICATION BY MASS SPECTROMETRY</scope>
</reference>
<reference key="5">
    <citation type="journal article" date="2007" name="Mol. Cell. Proteomics">
        <title>Profiling phosphoproteins of yeast mitochondria reveals a role of phosphorylation in assembly of the ATP synthase.</title>
        <authorList>
            <person name="Reinders J."/>
            <person name="Wagner K."/>
            <person name="Zahedi R.P."/>
            <person name="Stojanovski D."/>
            <person name="Eyrich B."/>
            <person name="van der Laan M."/>
            <person name="Rehling P."/>
            <person name="Sickmann A."/>
            <person name="Pfanner N."/>
            <person name="Meisinger C."/>
        </authorList>
    </citation>
    <scope>PHOSPHORYLATION [LARGE SCALE ANALYSIS] AT SER-140; SER-185 AND SER-205</scope>
    <scope>IDENTIFICATION BY MASS SPECTROMETRY [LARGE SCALE ANALYSIS]</scope>
    <source>
        <strain>ATCC 76625 / YPH499</strain>
    </source>
</reference>
<reference key="6">
    <citation type="journal article" date="2008" name="Mol. Cell. Proteomics">
        <title>A multidimensional chromatography technology for in-depth phosphoproteome analysis.</title>
        <authorList>
            <person name="Albuquerque C.P."/>
            <person name="Smolka M.B."/>
            <person name="Payne S.H."/>
            <person name="Bafna V."/>
            <person name="Eng J."/>
            <person name="Zhou H."/>
        </authorList>
    </citation>
    <scope>PHOSPHORYLATION [LARGE SCALE ANALYSIS] AT SER-140 AND SER-205</scope>
    <scope>IDENTIFICATION BY MASS SPECTROMETRY [LARGE SCALE ANALYSIS]</scope>
</reference>
<reference key="7">
    <citation type="journal article" date="2009" name="Science">
        <title>Global analysis of Cdk1 substrate phosphorylation sites provides insights into evolution.</title>
        <authorList>
            <person name="Holt L.J."/>
            <person name="Tuch B.B."/>
            <person name="Villen J."/>
            <person name="Johnson A.D."/>
            <person name="Gygi S.P."/>
            <person name="Morgan D.O."/>
        </authorList>
    </citation>
    <scope>PHOSPHORYLATION [LARGE SCALE ANALYSIS] AT SER-140 AND SER-205</scope>
    <scope>IDENTIFICATION BY MASS SPECTROMETRY [LARGE SCALE ANALYSIS]</scope>
</reference>
<evidence type="ECO:0000256" key="1">
    <source>
        <dbReference type="SAM" id="MobiDB-lite"/>
    </source>
</evidence>
<evidence type="ECO:0000269" key="2">
    <source>
    </source>
</evidence>
<evidence type="ECO:0000269" key="3">
    <source>
    </source>
</evidence>
<evidence type="ECO:0007744" key="4">
    <source>
    </source>
</evidence>
<evidence type="ECO:0007744" key="5">
    <source>
    </source>
</evidence>
<evidence type="ECO:0007744" key="6">
    <source>
    </source>
</evidence>
<comment type="subunit">
    <text evidence="2">Interacts with ULP1.</text>
</comment>
<comment type="subcellular location">
    <subcellularLocation>
        <location evidence="3">Endoplasmic reticulum membrane</location>
        <topology evidence="3">Peripheral membrane protein</topology>
    </subcellularLocation>
    <subcellularLocation>
        <location evidence="3">Mitochondrion outer membrane</location>
    </subcellularLocation>
    <subcellularLocation>
        <location evidence="3">Nucleus envelope</location>
    </subcellularLocation>
</comment>
<sequence>MVTIVFDHPAEDFPELKIAGEFTNWEGVPMKINTSSGKWEYKFDESSVTKHNDKDKVHFKFIDQNGNWFADDEYPKEVDEHSNENNVATLNNEEDGGSAGEEKDEGDKTAHNTNENGSELYYEGPETPTPSLKGNVTFPSPKTAISQDGSAFAKETTRKERKYEHAPLNEVPVERDPKEENKELSPNFSQEQTENKQDKGLDNLSEGNDNDNTRVNEDTDVTDTQESEHEINGSDTENTDMSEQEEIQKIDKPADQNAKSIVKEGDANTEDYESVLKKLLGALGRFFGSWFSWLTTKMSSSEAS</sequence>
<proteinExistence type="evidence at protein level"/>